<dbReference type="EMBL" id="BA000002">
    <property type="protein sequence ID" value="BAA79891.2"/>
    <property type="molecule type" value="Genomic_DNA"/>
</dbReference>
<dbReference type="PIR" id="C72686">
    <property type="entry name" value="C72686"/>
</dbReference>
<dbReference type="RefSeq" id="WP_010866061.1">
    <property type="nucleotide sequence ID" value="NC_000854.2"/>
</dbReference>
<dbReference type="SMR" id="Q9YDK6"/>
<dbReference type="STRING" id="272557.APE_0907.1"/>
<dbReference type="EnsemblBacteria" id="BAA79891">
    <property type="protein sequence ID" value="BAA79891"/>
    <property type="gene ID" value="APE_0907.1"/>
</dbReference>
<dbReference type="GeneID" id="1444996"/>
<dbReference type="KEGG" id="ape:APE_0907.1"/>
<dbReference type="PATRIC" id="fig|272557.25.peg.657"/>
<dbReference type="eggNOG" id="arCOG01257">
    <property type="taxonomic scope" value="Archaea"/>
</dbReference>
<dbReference type="BRENDA" id="3.6.4.B10">
    <property type="organism ID" value="171"/>
</dbReference>
<dbReference type="Proteomes" id="UP000002518">
    <property type="component" value="Chromosome"/>
</dbReference>
<dbReference type="GO" id="GO:0005524">
    <property type="term" value="F:ATP binding"/>
    <property type="evidence" value="ECO:0007669"/>
    <property type="project" value="UniProtKB-KW"/>
</dbReference>
<dbReference type="GO" id="GO:0016887">
    <property type="term" value="F:ATP hydrolysis activity"/>
    <property type="evidence" value="ECO:0007669"/>
    <property type="project" value="InterPro"/>
</dbReference>
<dbReference type="GO" id="GO:0140662">
    <property type="term" value="F:ATP-dependent protein folding chaperone"/>
    <property type="evidence" value="ECO:0007669"/>
    <property type="project" value="InterPro"/>
</dbReference>
<dbReference type="GO" id="GO:0051082">
    <property type="term" value="F:unfolded protein binding"/>
    <property type="evidence" value="ECO:0007669"/>
    <property type="project" value="InterPro"/>
</dbReference>
<dbReference type="CDD" id="cd03343">
    <property type="entry name" value="cpn60"/>
    <property type="match status" value="1"/>
</dbReference>
<dbReference type="Gene3D" id="3.50.7.10">
    <property type="entry name" value="GroEL"/>
    <property type="match status" value="1"/>
</dbReference>
<dbReference type="Gene3D" id="1.10.560.10">
    <property type="entry name" value="GroEL-like equatorial domain"/>
    <property type="match status" value="1"/>
</dbReference>
<dbReference type="Gene3D" id="3.30.260.10">
    <property type="entry name" value="TCP-1-like chaperonin intermediate domain"/>
    <property type="match status" value="1"/>
</dbReference>
<dbReference type="InterPro" id="IPR017998">
    <property type="entry name" value="Chaperone_TCP-1"/>
</dbReference>
<dbReference type="InterPro" id="IPR002194">
    <property type="entry name" value="Chaperonin_TCP-1_CS"/>
</dbReference>
<dbReference type="InterPro" id="IPR002423">
    <property type="entry name" value="Cpn60/GroEL/TCP-1"/>
</dbReference>
<dbReference type="InterPro" id="IPR027409">
    <property type="entry name" value="GroEL-like_apical_dom_sf"/>
</dbReference>
<dbReference type="InterPro" id="IPR027413">
    <property type="entry name" value="GROEL-like_equatorial_sf"/>
</dbReference>
<dbReference type="InterPro" id="IPR027410">
    <property type="entry name" value="TCP-1-like_intermed_sf"/>
</dbReference>
<dbReference type="InterPro" id="IPR053374">
    <property type="entry name" value="TCP-1_chaperonin"/>
</dbReference>
<dbReference type="InterPro" id="IPR054827">
    <property type="entry name" value="thermosome_alpha"/>
</dbReference>
<dbReference type="InterPro" id="IPR012714">
    <property type="entry name" value="Thermosome_arc"/>
</dbReference>
<dbReference type="NCBIfam" id="NF041082">
    <property type="entry name" value="thermosome_alpha"/>
    <property type="match status" value="1"/>
</dbReference>
<dbReference type="NCBIfam" id="TIGR02339">
    <property type="entry name" value="thermosome_arch"/>
    <property type="match status" value="1"/>
</dbReference>
<dbReference type="NCBIfam" id="NF041083">
    <property type="entry name" value="thermosome_beta"/>
    <property type="match status" value="1"/>
</dbReference>
<dbReference type="PANTHER" id="PTHR11353">
    <property type="entry name" value="CHAPERONIN"/>
    <property type="match status" value="1"/>
</dbReference>
<dbReference type="Pfam" id="PF00118">
    <property type="entry name" value="Cpn60_TCP1"/>
    <property type="match status" value="1"/>
</dbReference>
<dbReference type="PRINTS" id="PR00304">
    <property type="entry name" value="TCOMPLEXTCP1"/>
</dbReference>
<dbReference type="SUPFAM" id="SSF52029">
    <property type="entry name" value="GroEL apical domain-like"/>
    <property type="match status" value="1"/>
</dbReference>
<dbReference type="SUPFAM" id="SSF48592">
    <property type="entry name" value="GroEL equatorial domain-like"/>
    <property type="match status" value="1"/>
</dbReference>
<dbReference type="SUPFAM" id="SSF54849">
    <property type="entry name" value="GroEL-intermediate domain like"/>
    <property type="match status" value="1"/>
</dbReference>
<dbReference type="PROSITE" id="PS00750">
    <property type="entry name" value="TCP1_1"/>
    <property type="match status" value="1"/>
</dbReference>
<dbReference type="PROSITE" id="PS00751">
    <property type="entry name" value="TCP1_2"/>
    <property type="match status" value="1"/>
</dbReference>
<dbReference type="PROSITE" id="PS00995">
    <property type="entry name" value="TCP1_3"/>
    <property type="match status" value="1"/>
</dbReference>
<protein>
    <recommendedName>
        <fullName>Thermosome subunit alpha</fullName>
    </recommendedName>
    <alternativeName>
        <fullName>Chaperonin subunit alpha</fullName>
    </alternativeName>
    <alternativeName>
        <fullName>Thermosome subunit 1</fullName>
    </alternativeName>
</protein>
<organism>
    <name type="scientific">Aeropyrum pernix (strain ATCC 700893 / DSM 11879 / JCM 9820 / NBRC 100138 / K1)</name>
    <dbReference type="NCBI Taxonomy" id="272557"/>
    <lineage>
        <taxon>Archaea</taxon>
        <taxon>Thermoproteota</taxon>
        <taxon>Thermoprotei</taxon>
        <taxon>Desulfurococcales</taxon>
        <taxon>Desulfurococcaceae</taxon>
        <taxon>Aeropyrum</taxon>
    </lineage>
</organism>
<feature type="chain" id="PRO_0000128379" description="Thermosome subunit alpha">
    <location>
        <begin position="1"/>
        <end position="554"/>
    </location>
</feature>
<feature type="region of interest" description="Disordered" evidence="2">
    <location>
        <begin position="530"/>
        <end position="554"/>
    </location>
</feature>
<gene>
    <name type="primary">thsA</name>
    <name type="ordered locus">APE_0907.1</name>
</gene>
<name>THSA_AERPE</name>
<accession>Q9YDK6</accession>
<comment type="function">
    <text evidence="1">Molecular chaperone; binds unfolded polypeptides in vitro, and has a weak ATPase activity.</text>
</comment>
<comment type="subunit">
    <text evidence="1">Forms a Heterooligomeric complex of two stacked eight-membered rings.</text>
</comment>
<comment type="similarity">
    <text evidence="3">Belongs to the TCP-1 chaperonin family.</text>
</comment>
<reference key="1">
    <citation type="journal article" date="1999" name="DNA Res.">
        <title>Complete genome sequence of an aerobic hyper-thermophilic crenarchaeon, Aeropyrum pernix K1.</title>
        <authorList>
            <person name="Kawarabayasi Y."/>
            <person name="Hino Y."/>
            <person name="Horikawa H."/>
            <person name="Yamazaki S."/>
            <person name="Haikawa Y."/>
            <person name="Jin-no K."/>
            <person name="Takahashi M."/>
            <person name="Sekine M."/>
            <person name="Baba S."/>
            <person name="Ankai A."/>
            <person name="Kosugi H."/>
            <person name="Hosoyama A."/>
            <person name="Fukui S."/>
            <person name="Nagai Y."/>
            <person name="Nishijima K."/>
            <person name="Nakazawa H."/>
            <person name="Takamiya M."/>
            <person name="Masuda S."/>
            <person name="Funahashi T."/>
            <person name="Tanaka T."/>
            <person name="Kudoh Y."/>
            <person name="Yamazaki J."/>
            <person name="Kushida N."/>
            <person name="Oguchi A."/>
            <person name="Aoki K."/>
            <person name="Kubota K."/>
            <person name="Nakamura Y."/>
            <person name="Nomura N."/>
            <person name="Sako Y."/>
            <person name="Kikuchi H."/>
        </authorList>
    </citation>
    <scope>NUCLEOTIDE SEQUENCE [LARGE SCALE GENOMIC DNA]</scope>
    <source>
        <strain>ATCC 700893 / DSM 11879 / JCM 9820 / NBRC 100138 / K1</strain>
    </source>
</reference>
<keyword id="KW-0067">ATP-binding</keyword>
<keyword id="KW-0143">Chaperone</keyword>
<keyword id="KW-0547">Nucleotide-binding</keyword>
<keyword id="KW-1185">Reference proteome</keyword>
<sequence>MAATGYPVLILKEGTQRTYGREALRANILAARVLAEMLKSSLGPRGLDKMLVDAFGDITVTNDGATIVKEMEIQHPAAKLLVEVAKAQDAEVGDGTTSVVVLAGALLEKAEKLLDENLHPTIIIEGYTKAMEEALRLVDEAAVPVEVEDDSVLRRIAETTLASKFVGTGPERDKIISMVIDAIRTVAEKRPDGGYEVDLDYVKIEKKKGGSLLDSKLVRGIVLDKEVVHPAMPKRVENAKILVLDAPLEVQKPELTTKIRVTDIEKLESFLEEETRMLRDMVEKIAATGANVVITQKGIDEVAQHFLAKKGILAVRRVKRSDIEKVAKATGAKIVTSLRDLKPEYLGYAELVEERKVGEDKMVFIEGAKNPKSVTILLRGANDMLLDEAERNIKDALHGLRNILREPKIVGGGGAVEVELALKLKEFARTVGGKQQLAIEAYAEALETIPTVLAESAGMDALEALLKLRSLHSQGYKFAGVNVLEGKIEEDMTKINVYEPVLVKKQVIKSASEAAISILKIDDVIAAAPPKKKEKKGKTGEEEEEEGGGSKFEF</sequence>
<proteinExistence type="inferred from homology"/>
<evidence type="ECO:0000250" key="1"/>
<evidence type="ECO:0000256" key="2">
    <source>
        <dbReference type="SAM" id="MobiDB-lite"/>
    </source>
</evidence>
<evidence type="ECO:0000305" key="3"/>